<protein>
    <recommendedName>
        <fullName>Microcin J25-processing protein McjC</fullName>
    </recommendedName>
</protein>
<accession>Q9X2V9</accession>
<accession>Q333M5</accession>
<proteinExistence type="predicted"/>
<sequence length="513" mass="58710">MEIFNVKLNDTSIRIIFCKTLSAFRTENTIVMLKGKAVSNGKPVSTEEIARVVEEKGVSEVIENLDGVFCILIYHFNDLLIGKSIQSGPALFYCKKNMDIFVSDKISDIKFLNPDMTFSLNITMAEHYLSGNRIATQESLITGIYKVNNGEFIKFNNQLKPVLLRDEFSITKKNNSTIDSIIDNIEMMRDNRKIALLFSGGLDSALIFHTLKESGNKFCAYHFFSDESDDSEKYFAKEYCSKYGVDFISVNKNINFNEKLYFNLNPNSPDEIPLIFEQTDEEGEGQPPIDDDLLYLCGHGGDHIFGQNPSELFGIDAYRSHGLMFMHKKIVEFSNLKGKRYKDIIFSNISAFINTSNGCSPAKQEHVSDMKLASAQFFATDYTGKINKLTPFLHKNIIQHYAGLPVFSLFNQHFDRYPVRYEAFQRFGSDIFWKKTKRSSSQLIFRILSGKKDELVNTIKQSGLIEILGINHIELESILYENTTTRLTMELPYILNLYRLAKFIQLQSIDYKG</sequence>
<dbReference type="EMBL" id="AF061787">
    <property type="protein sequence ID" value="AAD28496.1"/>
    <property type="status" value="ALT_SEQ"/>
    <property type="molecule type" value="Genomic_DNA"/>
</dbReference>
<dbReference type="EMBL" id="AM116873">
    <property type="protein sequence ID" value="CAJ40934.1"/>
    <property type="molecule type" value="Genomic_DNA"/>
</dbReference>
<dbReference type="RefSeq" id="WP_097345836.1">
    <property type="nucleotide sequence ID" value="NZ_JACCOX010000114.1"/>
</dbReference>
<dbReference type="GO" id="GO:0005737">
    <property type="term" value="C:cytoplasm"/>
    <property type="evidence" value="ECO:0007669"/>
    <property type="project" value="UniProtKB-SubCell"/>
</dbReference>
<dbReference type="GO" id="GO:0004066">
    <property type="term" value="F:asparagine synthase (glutamine-hydrolyzing) activity"/>
    <property type="evidence" value="ECO:0007669"/>
    <property type="project" value="InterPro"/>
</dbReference>
<dbReference type="GO" id="GO:0017000">
    <property type="term" value="P:antibiotic biosynthetic process"/>
    <property type="evidence" value="ECO:0007669"/>
    <property type="project" value="UniProtKB-KW"/>
</dbReference>
<dbReference type="GO" id="GO:0006529">
    <property type="term" value="P:asparagine biosynthetic process"/>
    <property type="evidence" value="ECO:0007669"/>
    <property type="project" value="InterPro"/>
</dbReference>
<dbReference type="Gene3D" id="3.40.50.620">
    <property type="entry name" value="HUPs"/>
    <property type="match status" value="1"/>
</dbReference>
<dbReference type="InterPro" id="IPR001962">
    <property type="entry name" value="Asn_synthase"/>
</dbReference>
<dbReference type="InterPro" id="IPR014729">
    <property type="entry name" value="Rossmann-like_a/b/a_fold"/>
</dbReference>
<dbReference type="Pfam" id="PF00733">
    <property type="entry name" value="Asn_synthase"/>
    <property type="match status" value="1"/>
</dbReference>
<dbReference type="SUPFAM" id="SSF52402">
    <property type="entry name" value="Adenine nucleotide alpha hydrolases-like"/>
    <property type="match status" value="1"/>
</dbReference>
<reference key="1">
    <citation type="journal article" date="1999" name="J. Bacteriol.">
        <title>Sequence analysis of the four plasmid genes required to produce the circular peptide antibiotic microcin J25.</title>
        <authorList>
            <person name="Solbiati J.O."/>
            <person name="Ciaccio M."/>
            <person name="Farias R.N."/>
            <person name="Gonzalez-Pastor J.E."/>
            <person name="Moreno F."/>
            <person name="Salomon R.A."/>
        </authorList>
    </citation>
    <scope>NUCLEOTIDE SEQUENCE [GENOMIC DNA]</scope>
    <scope>FUNCTION</scope>
    <source>
        <strain>AY25</strain>
        <plasmid>pTUC100</plasmid>
    </source>
</reference>
<reference key="2">
    <citation type="journal article" date="2007" name="Chem. Biol.">
        <title>Two enzymes catalyze the maturation of a lasso peptide in Escherichia coli.</title>
        <authorList>
            <person name="Duquesne S."/>
            <person name="Destoumieux-Garzon D."/>
            <person name="Zirah S."/>
            <person name="Goulard C."/>
            <person name="Peduzzi J."/>
            <person name="Rebuffat S."/>
        </authorList>
    </citation>
    <scope>NUCLEOTIDE SEQUENCE [GENOMIC DNA]</scope>
    <scope>FUNCTION</scope>
    <source>
        <strain>AY25</strain>
        <plasmid>pTUC202</plasmid>
    </source>
</reference>
<evidence type="ECO:0000269" key="1">
    <source>
    </source>
</evidence>
<evidence type="ECO:0000269" key="2">
    <source>
    </source>
</evidence>
<evidence type="ECO:0000305" key="3"/>
<gene>
    <name type="primary">mcjC</name>
</gene>
<keyword id="KW-0045">Antibiotic biosynthesis</keyword>
<keyword id="KW-0963">Cytoplasm</keyword>
<keyword id="KW-0614">Plasmid</keyword>
<comment type="function">
    <text evidence="1 2">Along with McjB, necessary and sufficient to process the inactive microcin J25 (McjA) precursor into the active peptide. May be involved in the formation of the amide bond between Gly-38 and Glu-53 of McjA.</text>
</comment>
<comment type="subcellular location">
    <subcellularLocation>
        <location evidence="3">Cytoplasm</location>
    </subcellularLocation>
</comment>
<comment type="sequence caution" evidence="3">
    <conflict type="miscellaneous discrepancy">
        <sequence resource="EMBL-CDS" id="AAD28496"/>
    </conflict>
    <text>Has 3 extra noncontiguous nucleotides compared to the shown sequence. Removing these nucleotides suprresses the original stop codon at position 443.</text>
</comment>
<organism>
    <name type="scientific">Escherichia coli</name>
    <dbReference type="NCBI Taxonomy" id="562"/>
    <lineage>
        <taxon>Bacteria</taxon>
        <taxon>Pseudomonadati</taxon>
        <taxon>Pseudomonadota</taxon>
        <taxon>Gammaproteobacteria</taxon>
        <taxon>Enterobacterales</taxon>
        <taxon>Enterobacteriaceae</taxon>
        <taxon>Escherichia</taxon>
    </lineage>
</organism>
<feature type="chain" id="PRO_0000068577" description="Microcin J25-processing protein McjC">
    <location>
        <begin position="1"/>
        <end position="513"/>
    </location>
</feature>
<feature type="domain" description="Asparagine synthetase">
    <location>
        <begin position="176"/>
        <end position="436"/>
    </location>
</feature>
<geneLocation type="plasmid">
    <name>pTUC100</name>
</geneLocation>
<geneLocation type="plasmid">
    <name>pTUC202</name>
</geneLocation>
<name>MCJC_ECOLX</name>